<reference key="1">
    <citation type="journal article" date="1998" name="Neuron">
        <title>CAPON: a protein associated with neuronal nitric oxide synthase that regulates its interactions with PSD95.</title>
        <authorList>
            <person name="Jaffrey S.R."/>
            <person name="Snowman A.M."/>
            <person name="Eliasson M.J.L."/>
            <person name="Cohen N.A."/>
            <person name="Snyder S.H."/>
        </authorList>
    </citation>
    <scope>NUCLEOTIDE SEQUENCE [MRNA]</scope>
    <scope>FUNCTION</scope>
    <scope>TISSUE SPECIFICITY</scope>
    <scope>INTERACTION WITH NOS1</scope>
    <scope>MUTAGENESIS OF ILE-501; ALA-502 AND VAL-503</scope>
</reference>
<reference key="2">
    <citation type="journal article" date="2000" name="J. Mol. Biol.">
        <title>Solution structure and backbone dynamics of the second PDZ domain of postsynaptic density-95.</title>
        <authorList>
            <person name="Tochio H."/>
            <person name="Hung F."/>
            <person name="Li M."/>
            <person name="Bredt D.S."/>
            <person name="Zhang M."/>
        </authorList>
    </citation>
    <scope>INTERACTION WITH DLG4</scope>
</reference>
<reference key="3">
    <citation type="journal article" date="2000" name="Neuron">
        <title>Dexras1: a G protein specifically coupled to neuronal nitric oxide synthase via CAPON.</title>
        <authorList>
            <person name="Fang M."/>
            <person name="Jaffrey S.R."/>
            <person name="Sawa A."/>
            <person name="Ye K."/>
            <person name="Luo X."/>
            <person name="Snyder S.H."/>
        </authorList>
    </citation>
    <scope>INTERACTION WITH RASD1 AND NOS1</scope>
</reference>
<reference key="4">
    <citation type="journal article" date="2002" name="Proc. Natl. Acad. Sci. U.S.A.">
        <title>Neuronal nitric-oxide synthase localization mediated by a ternary complex with synapsin and CAPON.</title>
        <authorList>
            <person name="Jaffrey S.R."/>
            <person name="Benfenati F."/>
            <person name="Snowman A.M."/>
            <person name="Czernik A.J."/>
            <person name="Snyder S.H."/>
        </authorList>
    </citation>
    <scope>INTERACTION WITH NOS1; SYN1; SYN2 AND SYN3</scope>
</reference>
<reference key="5">
    <citation type="journal article" date="2021" name="Sci. Adv.">
        <title>Recessive NOS1AP variants impair actin remodeling and cause glomerulopathy in humans and mice.</title>
        <authorList>
            <person name="Majmundar A.J."/>
            <person name="Buerger F."/>
            <person name="Forbes T.A."/>
            <person name="Klaembt V."/>
            <person name="Schneider R."/>
            <person name="Deutsch K."/>
            <person name="Kitzler T.M."/>
            <person name="Howden S.E."/>
            <person name="Scurr M."/>
            <person name="Tan K.S."/>
            <person name="Krzeminski M."/>
            <person name="Widmeier E."/>
            <person name="Braun D.A."/>
            <person name="Lai E."/>
            <person name="Ullah I."/>
            <person name="Amar A."/>
            <person name="Kolb A."/>
            <person name="Eddy K."/>
            <person name="Chen C.H."/>
            <person name="Salmanullah D."/>
            <person name="Dai R."/>
            <person name="Nakayama M."/>
            <person name="Ottlewski I."/>
            <person name="Kolvenbach C.M."/>
            <person name="Onuchic-Whitford A.C."/>
            <person name="Mao Y."/>
            <person name="Mann N."/>
            <person name="Nabhan M.M."/>
            <person name="Rosen S."/>
            <person name="Forman-Kay J.D."/>
            <person name="Soliman N.A."/>
            <person name="Heilos A."/>
            <person name="Kain R."/>
            <person name="Aufricht C."/>
            <person name="Mane S."/>
            <person name="Lifton R.P."/>
            <person name="Shril S."/>
            <person name="Little M.H."/>
            <person name="Hildebrandt F."/>
        </authorList>
    </citation>
    <scope>FUNCTION</scope>
    <scope>TISSUE SPECIFICITY</scope>
    <scope>SUBCELLULAR LOCATION</scope>
</reference>
<evidence type="ECO:0000250" key="1">
    <source>
        <dbReference type="UniProtKB" id="O75052"/>
    </source>
</evidence>
<evidence type="ECO:0000250" key="2">
    <source>
        <dbReference type="UniProtKB" id="Q9D3A8"/>
    </source>
</evidence>
<evidence type="ECO:0000255" key="3"/>
<evidence type="ECO:0000255" key="4">
    <source>
        <dbReference type="PROSITE-ProRule" id="PRU00148"/>
    </source>
</evidence>
<evidence type="ECO:0000256" key="5">
    <source>
        <dbReference type="SAM" id="MobiDB-lite"/>
    </source>
</evidence>
<evidence type="ECO:0000269" key="6">
    <source>
    </source>
</evidence>
<evidence type="ECO:0000269" key="7">
    <source>
    </source>
</evidence>
<evidence type="ECO:0000269" key="8">
    <source>
    </source>
</evidence>
<evidence type="ECO:0000269" key="9">
    <source>
    </source>
</evidence>
<evidence type="ECO:0000269" key="10">
    <source>
    </source>
</evidence>
<evidence type="ECO:0000305" key="11"/>
<evidence type="ECO:0000312" key="12">
    <source>
        <dbReference type="RGD" id="620106"/>
    </source>
</evidence>
<name>CAPON_RAT</name>
<keyword id="KW-0965">Cell junction</keyword>
<keyword id="KW-0966">Cell projection</keyword>
<keyword id="KW-0175">Coiled coil</keyword>
<keyword id="KW-0597">Phosphoprotein</keyword>
<keyword id="KW-1185">Reference proteome</keyword>
<sequence>MPSKTKYNLVDDGHDLRIPLHNEDAFQHGISFEAKYVGSLDVPRPNSRVEIVAAMRRIRYEFKAKNIKKKKVSIMVSVDGVKVILKKKKKKKEWTWDESKMLVMQDPIYRIFYVSHDSQDLKIFSYIARDGASNIFRCNVFKSKKKSQAMRIVRTVGQAFEVCHKLSLQHTQQNADGQEDGESERNSDGSGDPGRQLTGAERVSTATAEETDIDAVEVPLPGNDILEFSRGVTDLDAIGKDGGSHIDTTVSPHPQEPMLAASPRMLLPSSSSSKPPGLGTGTPLSTHHQMQLLQQLLQQQQQQTQVAVAQVHLLKDQLAAEAAARLEAQARVHQLLLQNKDMLQHISLLVKQVQELELKLSGQSTMGSQDSLLEITFRSGALPVLCESTTPKPEDLHSPLLGAGLADFAHPVGSPLGRRDCLVKLECFRFLPAEDNQPMAQGEPLLGGLELIKFRESGIASEYESNTDESEERDSWSQEELPRLLNVLQRQELGDSLDDEIAV</sequence>
<organism>
    <name type="scientific">Rattus norvegicus</name>
    <name type="common">Rat</name>
    <dbReference type="NCBI Taxonomy" id="10116"/>
    <lineage>
        <taxon>Eukaryota</taxon>
        <taxon>Metazoa</taxon>
        <taxon>Chordata</taxon>
        <taxon>Craniata</taxon>
        <taxon>Vertebrata</taxon>
        <taxon>Euteleostomi</taxon>
        <taxon>Mammalia</taxon>
        <taxon>Eutheria</taxon>
        <taxon>Euarchontoglires</taxon>
        <taxon>Glires</taxon>
        <taxon>Rodentia</taxon>
        <taxon>Myomorpha</taxon>
        <taxon>Muroidea</taxon>
        <taxon>Muridae</taxon>
        <taxon>Murinae</taxon>
        <taxon>Rattus</taxon>
    </lineage>
</organism>
<accession>O54960</accession>
<comment type="function">
    <text evidence="9 10">Adapter protein involved in neuronal nitric-oxide (NO) synthesis regulation via its association with nNOS/NOS1. The complex formed with NOS1 and synapsins is necessary for specific NO and synapsin functions at a presynaptic level. Mediates an indirect interaction between NOS1 and RASD1 leading to enhance the ability of NOS1 to activate RASD1. Competes with DLG4 for interaction with NOS1, possibly affecting NOS1 activity by regulating the interaction between NOS1 and DLG4. In kidney podocytes, plays a role in podosomes and filopodia formation through CDC42 activation (PubMed:33523862).</text>
</comment>
<comment type="subunit">
    <text evidence="6 7 8 10">Interacts with the PDZ domain of NOS1 or the second PDZ domain of DLG4 through its C-terminus. Interacts with RASD1 and SYN1, SYN2 and SYN3 via its PID domain. Forms a ternary complex with NOS1 and RASD1. Forms a ternary complex with NOS1 and SYN1.</text>
</comment>
<comment type="subcellular location">
    <subcellularLocation>
        <location evidence="9">Cell projection</location>
        <location evidence="9">Filopodium</location>
    </subcellularLocation>
    <subcellularLocation>
        <location evidence="9">Cell projection</location>
        <location evidence="9">Podosome</location>
    </subcellularLocation>
</comment>
<comment type="tissue specificity">
    <text evidence="9 10">Mainly expressed in brain. Highly expressed in accessory olfactory bulb, caudate-putamen, cerebellum, cerebral cortex, dentate gyrus of the hippocampus, islands of Calleja, olfactory bulb and supraoptic nucleus. Expressed in kidney glomeruli podocytes (at protein level) (PubMed:33523862).</text>
</comment>
<proteinExistence type="evidence at protein level"/>
<protein>
    <recommendedName>
        <fullName evidence="11">Carboxyl-terminal PDZ ligand of neuronal nitric oxide synthase protein</fullName>
    </recommendedName>
    <alternativeName>
        <fullName>C-terminal PDZ ligand of neuronal nitric oxide synthase protein</fullName>
    </alternativeName>
    <alternativeName>
        <fullName>Nitric oxide synthase 1 adaptor protein</fullName>
    </alternativeName>
</protein>
<gene>
    <name evidence="12" type="primary">Nos1ap</name>
    <name type="synonym">Capon</name>
</gene>
<feature type="chain" id="PRO_0000089318" description="Carboxyl-terminal PDZ ligand of neuronal nitric oxide synthase protein">
    <location>
        <begin position="1"/>
        <end position="503"/>
    </location>
</feature>
<feature type="domain" description="PID" evidence="4">
    <location>
        <begin position="26"/>
        <end position="191"/>
    </location>
</feature>
<feature type="region of interest" description="Disordered" evidence="5">
    <location>
        <begin position="170"/>
        <end position="212"/>
    </location>
</feature>
<feature type="region of interest" description="Disordered" evidence="5">
    <location>
        <begin position="266"/>
        <end position="285"/>
    </location>
</feature>
<feature type="region of interest" description="Interaction with NOS1">
    <location>
        <begin position="491"/>
        <end position="503"/>
    </location>
</feature>
<feature type="coiled-coil region" evidence="3">
    <location>
        <begin position="319"/>
        <end position="360"/>
    </location>
</feature>
<feature type="short sequence motif" description="PDZ-binding">
    <location>
        <begin position="501"/>
        <end position="503"/>
    </location>
</feature>
<feature type="modified residue" description="Phosphoserine" evidence="2">
    <location>
        <position position="183"/>
    </location>
</feature>
<feature type="modified residue" description="Phosphoserine" evidence="2">
    <location>
        <position position="187"/>
    </location>
</feature>
<feature type="modified residue" description="Phosphoserine" evidence="2">
    <location>
        <position position="190"/>
    </location>
</feature>
<feature type="modified residue" description="Phosphoserine" evidence="1">
    <location>
        <position position="262"/>
    </location>
</feature>
<feature type="modified residue" description="Phosphoserine" evidence="2">
    <location>
        <position position="368"/>
    </location>
</feature>
<feature type="modified residue" description="Phosphoserine" evidence="2">
    <location>
        <position position="371"/>
    </location>
</feature>
<feature type="modified residue" description="Phosphoserine" evidence="2">
    <location>
        <position position="398"/>
    </location>
</feature>
<feature type="modified residue" description="Phosphoserine" evidence="2">
    <location>
        <position position="414"/>
    </location>
</feature>
<feature type="mutagenesis site" description="Does not affect interaction with NOS1." evidence="10">
    <original>I</original>
    <variation>S</variation>
    <variation>A</variation>
    <location>
        <position position="501"/>
    </location>
</feature>
<feature type="mutagenesis site" description="Abolishes interaction with NOS1." evidence="10">
    <original>A</original>
    <variation>D</variation>
    <location>
        <position position="502"/>
    </location>
</feature>
<feature type="mutagenesis site" description="Abolishes interaction with NOS1." evidence="10">
    <original>V</original>
    <variation>A</variation>
    <location>
        <position position="503"/>
    </location>
</feature>
<dbReference type="EMBL" id="AF037071">
    <property type="protein sequence ID" value="AAC40065.1"/>
    <property type="molecule type" value="mRNA"/>
</dbReference>
<dbReference type="RefSeq" id="NP_620277.1">
    <property type="nucleotide sequence ID" value="NM_138922.1"/>
</dbReference>
<dbReference type="SMR" id="O54960"/>
<dbReference type="CORUM" id="O54960"/>
<dbReference type="FunCoup" id="O54960">
    <property type="interactions" value="1335"/>
</dbReference>
<dbReference type="IntAct" id="O54960">
    <property type="interactions" value="2"/>
</dbReference>
<dbReference type="MINT" id="O54960"/>
<dbReference type="STRING" id="10116.ENSRNOP00000038197"/>
<dbReference type="GlyGen" id="O54960">
    <property type="glycosylation" value="5 sites, 1 O-linked glycan (5 sites)"/>
</dbReference>
<dbReference type="iPTMnet" id="O54960"/>
<dbReference type="PhosphoSitePlus" id="O54960"/>
<dbReference type="PaxDb" id="10116-ENSRNOP00000038197"/>
<dbReference type="PeptideAtlas" id="O54960"/>
<dbReference type="GeneID" id="192363"/>
<dbReference type="KEGG" id="rno:192363"/>
<dbReference type="UCSC" id="RGD:620106">
    <property type="organism name" value="rat"/>
</dbReference>
<dbReference type="AGR" id="RGD:620106"/>
<dbReference type="CTD" id="9722"/>
<dbReference type="RGD" id="620106">
    <property type="gene designation" value="Nos1ap"/>
</dbReference>
<dbReference type="eggNOG" id="KOG4458">
    <property type="taxonomic scope" value="Eukaryota"/>
</dbReference>
<dbReference type="eggNOG" id="KOG4815">
    <property type="taxonomic scope" value="Eukaryota"/>
</dbReference>
<dbReference type="InParanoid" id="O54960"/>
<dbReference type="PhylomeDB" id="O54960"/>
<dbReference type="PRO" id="PR:O54960"/>
<dbReference type="Proteomes" id="UP000002494">
    <property type="component" value="Unplaced"/>
</dbReference>
<dbReference type="GO" id="GO:0070161">
    <property type="term" value="C:anchoring junction"/>
    <property type="evidence" value="ECO:0007669"/>
    <property type="project" value="UniProtKB-KW"/>
</dbReference>
<dbReference type="GO" id="GO:0005901">
    <property type="term" value="C:caveola"/>
    <property type="evidence" value="ECO:0000266"/>
    <property type="project" value="RGD"/>
</dbReference>
<dbReference type="GO" id="GO:0005737">
    <property type="term" value="C:cytoplasm"/>
    <property type="evidence" value="ECO:0000303"/>
    <property type="project" value="UniProtKB"/>
</dbReference>
<dbReference type="GO" id="GO:0005829">
    <property type="term" value="C:cytosol"/>
    <property type="evidence" value="ECO:0000314"/>
    <property type="project" value="BHF-UCL"/>
</dbReference>
<dbReference type="GO" id="GO:0030175">
    <property type="term" value="C:filopodium"/>
    <property type="evidence" value="ECO:0007669"/>
    <property type="project" value="UniProtKB-SubCell"/>
</dbReference>
<dbReference type="GO" id="GO:0098978">
    <property type="term" value="C:glutamatergic synapse"/>
    <property type="evidence" value="ECO:0000314"/>
    <property type="project" value="SynGO"/>
</dbReference>
<dbReference type="GO" id="GO:0005739">
    <property type="term" value="C:mitochondrion"/>
    <property type="evidence" value="ECO:0000266"/>
    <property type="project" value="RGD"/>
</dbReference>
<dbReference type="GO" id="GO:0005634">
    <property type="term" value="C:nucleus"/>
    <property type="evidence" value="ECO:0000314"/>
    <property type="project" value="BHF-UCL"/>
</dbReference>
<dbReference type="GO" id="GO:0002102">
    <property type="term" value="C:podosome"/>
    <property type="evidence" value="ECO:0007669"/>
    <property type="project" value="UniProtKB-SubCell"/>
</dbReference>
<dbReference type="GO" id="GO:0098794">
    <property type="term" value="C:postsynapse"/>
    <property type="evidence" value="ECO:0000314"/>
    <property type="project" value="SynGO"/>
</dbReference>
<dbReference type="GO" id="GO:0098793">
    <property type="term" value="C:presynapse"/>
    <property type="evidence" value="ECO:0000314"/>
    <property type="project" value="SynGO"/>
</dbReference>
<dbReference type="GO" id="GO:0033017">
    <property type="term" value="C:sarcoplasmic reticulum membrane"/>
    <property type="evidence" value="ECO:0000266"/>
    <property type="project" value="RGD"/>
</dbReference>
<dbReference type="GO" id="GO:0030315">
    <property type="term" value="C:T-tubule"/>
    <property type="evidence" value="ECO:0000266"/>
    <property type="project" value="RGD"/>
</dbReference>
<dbReference type="GO" id="GO:0030018">
    <property type="term" value="C:Z disc"/>
    <property type="evidence" value="ECO:0000266"/>
    <property type="project" value="RGD"/>
</dbReference>
<dbReference type="GO" id="GO:0031434">
    <property type="term" value="F:mitogen-activated protein kinase kinase binding"/>
    <property type="evidence" value="ECO:0000353"/>
    <property type="project" value="RGD"/>
</dbReference>
<dbReference type="GO" id="GO:0050998">
    <property type="term" value="F:nitric-oxide synthase binding"/>
    <property type="evidence" value="ECO:0000314"/>
    <property type="project" value="RGD"/>
</dbReference>
<dbReference type="GO" id="GO:0030165">
    <property type="term" value="F:PDZ domain binding"/>
    <property type="evidence" value="ECO:0000314"/>
    <property type="project" value="RGD"/>
</dbReference>
<dbReference type="GO" id="GO:0002020">
    <property type="term" value="F:protease binding"/>
    <property type="evidence" value="ECO:0000353"/>
    <property type="project" value="RGD"/>
</dbReference>
<dbReference type="GO" id="GO:0035591">
    <property type="term" value="F:signaling adaptor activity"/>
    <property type="evidence" value="ECO:0000314"/>
    <property type="project" value="UniProtKB"/>
</dbReference>
<dbReference type="GO" id="GO:0031102">
    <property type="term" value="P:neuron projection regeneration"/>
    <property type="evidence" value="ECO:0000270"/>
    <property type="project" value="RGD"/>
</dbReference>
<dbReference type="GO" id="GO:0007269">
    <property type="term" value="P:neurotransmitter secretion"/>
    <property type="evidence" value="ECO:0000303"/>
    <property type="project" value="UniProtKB"/>
</dbReference>
<dbReference type="GO" id="GO:0098974">
    <property type="term" value="P:postsynaptic actin cytoskeleton organization"/>
    <property type="evidence" value="ECO:0000266"/>
    <property type="project" value="RGD"/>
</dbReference>
<dbReference type="GO" id="GO:1902514">
    <property type="term" value="P:regulation of calcium ion transmembrane transport via high voltage-gated calcium channel"/>
    <property type="evidence" value="ECO:0000314"/>
    <property type="project" value="BHF-UCL"/>
</dbReference>
<dbReference type="GO" id="GO:0098901">
    <property type="term" value="P:regulation of cardiac muscle cell action potential"/>
    <property type="evidence" value="ECO:0000314"/>
    <property type="project" value="BHF-UCL"/>
</dbReference>
<dbReference type="GO" id="GO:0003062">
    <property type="term" value="P:regulation of heart rate by chemical signal"/>
    <property type="evidence" value="ECO:0000266"/>
    <property type="project" value="RGD"/>
</dbReference>
<dbReference type="GO" id="GO:0045428">
    <property type="term" value="P:regulation of nitric oxide biosynthetic process"/>
    <property type="evidence" value="ECO:0000304"/>
    <property type="project" value="DFLAT"/>
</dbReference>
<dbReference type="GO" id="GO:0060307">
    <property type="term" value="P:regulation of ventricular cardiac muscle cell membrane repolarization"/>
    <property type="evidence" value="ECO:0000266"/>
    <property type="project" value="RGD"/>
</dbReference>
<dbReference type="CDD" id="cd01270">
    <property type="entry name" value="PTB_CAPON-like"/>
    <property type="match status" value="1"/>
</dbReference>
<dbReference type="FunFam" id="2.30.29.30:FF:000124">
    <property type="entry name" value="carboxyl-terminal PDZ ligand of neuronal nitric oxide synthase protein-like"/>
    <property type="match status" value="1"/>
</dbReference>
<dbReference type="Gene3D" id="2.30.29.30">
    <property type="entry name" value="Pleckstrin-homology domain (PH domain)/Phosphotyrosine-binding domain (PTB)"/>
    <property type="match status" value="1"/>
</dbReference>
<dbReference type="InterPro" id="IPR051133">
    <property type="entry name" value="Adapter_Engulfment-Domain"/>
</dbReference>
<dbReference type="InterPro" id="IPR011993">
    <property type="entry name" value="PH-like_dom_sf"/>
</dbReference>
<dbReference type="InterPro" id="IPR006020">
    <property type="entry name" value="PTB/PI_dom"/>
</dbReference>
<dbReference type="PANTHER" id="PTHR11232:SF76">
    <property type="entry name" value="CARBOXYL-TERMINAL PDZ LIGAND OF NEURONAL NITRIC OXIDE SYNTHASE PROTEIN"/>
    <property type="match status" value="1"/>
</dbReference>
<dbReference type="PANTHER" id="PTHR11232">
    <property type="entry name" value="PHOSPHOTYROSINE INTERACTION DOMAIN-CONTAINING FAMILY MEMBER"/>
    <property type="match status" value="1"/>
</dbReference>
<dbReference type="Pfam" id="PF00640">
    <property type="entry name" value="PID"/>
    <property type="match status" value="1"/>
</dbReference>
<dbReference type="SMART" id="SM00462">
    <property type="entry name" value="PTB"/>
    <property type="match status" value="1"/>
</dbReference>
<dbReference type="SUPFAM" id="SSF50729">
    <property type="entry name" value="PH domain-like"/>
    <property type="match status" value="1"/>
</dbReference>
<dbReference type="PROSITE" id="PS01179">
    <property type="entry name" value="PID"/>
    <property type="match status" value="1"/>
</dbReference>